<accession>A5VQW7</accession>
<protein>
    <recommendedName>
        <fullName evidence="1">Glutamate racemase</fullName>
        <ecNumber evidence="1">5.1.1.3</ecNumber>
    </recommendedName>
</protein>
<keyword id="KW-0133">Cell shape</keyword>
<keyword id="KW-0961">Cell wall biogenesis/degradation</keyword>
<keyword id="KW-0413">Isomerase</keyword>
<keyword id="KW-0573">Peptidoglycan synthesis</keyword>
<comment type="function">
    <text evidence="1">Provides the (R)-glutamate required for cell wall biosynthesis.</text>
</comment>
<comment type="catalytic activity">
    <reaction evidence="1">
        <text>L-glutamate = D-glutamate</text>
        <dbReference type="Rhea" id="RHEA:12813"/>
        <dbReference type="ChEBI" id="CHEBI:29985"/>
        <dbReference type="ChEBI" id="CHEBI:29986"/>
        <dbReference type="EC" id="5.1.1.3"/>
    </reaction>
</comment>
<comment type="pathway">
    <text evidence="1">Cell wall biogenesis; peptidoglycan biosynthesis.</text>
</comment>
<comment type="similarity">
    <text evidence="1">Belongs to the aspartate/glutamate racemases family.</text>
</comment>
<gene>
    <name evidence="1" type="primary">murI</name>
    <name type="ordered locus">BOV_1157</name>
</gene>
<evidence type="ECO:0000255" key="1">
    <source>
        <dbReference type="HAMAP-Rule" id="MF_00258"/>
    </source>
</evidence>
<dbReference type="EC" id="5.1.1.3" evidence="1"/>
<dbReference type="EMBL" id="CP000708">
    <property type="protein sequence ID" value="ABQ61362.1"/>
    <property type="molecule type" value="Genomic_DNA"/>
</dbReference>
<dbReference type="RefSeq" id="WP_006012757.1">
    <property type="nucleotide sequence ID" value="NC_009505.1"/>
</dbReference>
<dbReference type="SMR" id="A5VQW7"/>
<dbReference type="GeneID" id="45124564"/>
<dbReference type="KEGG" id="bov:BOV_1157"/>
<dbReference type="HOGENOM" id="CLU_052344_2_0_5"/>
<dbReference type="PhylomeDB" id="A5VQW7"/>
<dbReference type="UniPathway" id="UPA00219"/>
<dbReference type="Proteomes" id="UP000006383">
    <property type="component" value="Chromosome I"/>
</dbReference>
<dbReference type="GO" id="GO:0008881">
    <property type="term" value="F:glutamate racemase activity"/>
    <property type="evidence" value="ECO:0007669"/>
    <property type="project" value="UniProtKB-UniRule"/>
</dbReference>
<dbReference type="GO" id="GO:0071555">
    <property type="term" value="P:cell wall organization"/>
    <property type="evidence" value="ECO:0007669"/>
    <property type="project" value="UniProtKB-KW"/>
</dbReference>
<dbReference type="GO" id="GO:0009252">
    <property type="term" value="P:peptidoglycan biosynthetic process"/>
    <property type="evidence" value="ECO:0007669"/>
    <property type="project" value="UniProtKB-UniRule"/>
</dbReference>
<dbReference type="GO" id="GO:0008360">
    <property type="term" value="P:regulation of cell shape"/>
    <property type="evidence" value="ECO:0007669"/>
    <property type="project" value="UniProtKB-KW"/>
</dbReference>
<dbReference type="Gene3D" id="3.40.50.1860">
    <property type="match status" value="2"/>
</dbReference>
<dbReference type="HAMAP" id="MF_00258">
    <property type="entry name" value="Glu_racemase"/>
    <property type="match status" value="1"/>
</dbReference>
<dbReference type="InterPro" id="IPR015942">
    <property type="entry name" value="Asp/Glu/hydantoin_racemase"/>
</dbReference>
<dbReference type="InterPro" id="IPR001920">
    <property type="entry name" value="Asp/Glu_race"/>
</dbReference>
<dbReference type="InterPro" id="IPR018187">
    <property type="entry name" value="Asp/Glu_racemase_AS_1"/>
</dbReference>
<dbReference type="InterPro" id="IPR033134">
    <property type="entry name" value="Asp/Glu_racemase_AS_2"/>
</dbReference>
<dbReference type="InterPro" id="IPR004391">
    <property type="entry name" value="Glu_race"/>
</dbReference>
<dbReference type="NCBIfam" id="TIGR00067">
    <property type="entry name" value="glut_race"/>
    <property type="match status" value="1"/>
</dbReference>
<dbReference type="PANTHER" id="PTHR21198">
    <property type="entry name" value="GLUTAMATE RACEMASE"/>
    <property type="match status" value="1"/>
</dbReference>
<dbReference type="PANTHER" id="PTHR21198:SF2">
    <property type="entry name" value="GLUTAMATE RACEMASE"/>
    <property type="match status" value="1"/>
</dbReference>
<dbReference type="Pfam" id="PF01177">
    <property type="entry name" value="Asp_Glu_race"/>
    <property type="match status" value="1"/>
</dbReference>
<dbReference type="SUPFAM" id="SSF53681">
    <property type="entry name" value="Aspartate/glutamate racemase"/>
    <property type="match status" value="2"/>
</dbReference>
<dbReference type="PROSITE" id="PS00923">
    <property type="entry name" value="ASP_GLU_RACEMASE_1"/>
    <property type="match status" value="1"/>
</dbReference>
<dbReference type="PROSITE" id="PS00924">
    <property type="entry name" value="ASP_GLU_RACEMASE_2"/>
    <property type="match status" value="1"/>
</dbReference>
<name>MURI_BRUO2</name>
<organism>
    <name type="scientific">Brucella ovis (strain ATCC 25840 / 63/290 / NCTC 10512)</name>
    <dbReference type="NCBI Taxonomy" id="444178"/>
    <lineage>
        <taxon>Bacteria</taxon>
        <taxon>Pseudomonadati</taxon>
        <taxon>Pseudomonadota</taxon>
        <taxon>Alphaproteobacteria</taxon>
        <taxon>Hyphomicrobiales</taxon>
        <taxon>Brucellaceae</taxon>
        <taxon>Brucella/Ochrobactrum group</taxon>
        <taxon>Brucella</taxon>
    </lineage>
</organism>
<reference key="1">
    <citation type="journal article" date="2009" name="PLoS ONE">
        <title>Genome degradation in Brucella ovis corresponds with narrowing of its host range and tissue tropism.</title>
        <authorList>
            <person name="Tsolis R.M."/>
            <person name="Seshadri R."/>
            <person name="Santos R.L."/>
            <person name="Sangari F.J."/>
            <person name="Lobo J.M."/>
            <person name="de Jong M.F."/>
            <person name="Ren Q."/>
            <person name="Myers G."/>
            <person name="Brinkac L.M."/>
            <person name="Nelson W.C."/>
            <person name="Deboy R.T."/>
            <person name="Angiuoli S."/>
            <person name="Khouri H."/>
            <person name="Dimitrov G."/>
            <person name="Robinson J.R."/>
            <person name="Mulligan S."/>
            <person name="Walker R.L."/>
            <person name="Elzer P.E."/>
            <person name="Hassan K.A."/>
            <person name="Paulsen I.T."/>
        </authorList>
    </citation>
    <scope>NUCLEOTIDE SEQUENCE [LARGE SCALE GENOMIC DNA]</scope>
    <source>
        <strain>ATCC 25840 / 63/290 / NCTC 10512</strain>
    </source>
</reference>
<sequence>MKKAPAGSFPAKPTIAPERPILVFDSGIGGLTVLREARVVMPDRRFVYIADDAGFPYGNWEEEALKRRIIELFGEFIANYDPEIAVIACNTASTLVLEDLRRAYPSVPFVGTVPAIKPAAERTSSGLVSVLATPGTVKRAYTRDLIQSFASRCHVRLVGVDGLAAIAEAHIRGESFDEALVMAQIAPCFIEKGGKRTDIVVLACTHYPFLVNVLRRLAPWPVDWLDPAEAIARRMKSLLPARSDDDEFHSQDDLAFFTSRKPDYAIRRLMQGFGLRF</sequence>
<feature type="chain" id="PRO_1000047551" description="Glutamate racemase">
    <location>
        <begin position="1"/>
        <end position="277"/>
    </location>
</feature>
<feature type="active site" description="Proton donor/acceptor" evidence="1">
    <location>
        <position position="89"/>
    </location>
</feature>
<feature type="active site" description="Proton donor/acceptor" evidence="1">
    <location>
        <position position="204"/>
    </location>
</feature>
<feature type="binding site" evidence="1">
    <location>
        <begin position="25"/>
        <end position="26"/>
    </location>
    <ligand>
        <name>substrate</name>
    </ligand>
</feature>
<feature type="binding site" evidence="1">
    <location>
        <begin position="57"/>
        <end position="58"/>
    </location>
    <ligand>
        <name>substrate</name>
    </ligand>
</feature>
<feature type="binding site" evidence="1">
    <location>
        <begin position="90"/>
        <end position="91"/>
    </location>
    <ligand>
        <name>substrate</name>
    </ligand>
</feature>
<feature type="binding site" evidence="1">
    <location>
        <begin position="205"/>
        <end position="206"/>
    </location>
    <ligand>
        <name>substrate</name>
    </ligand>
</feature>
<proteinExistence type="inferred from homology"/>